<organismHost>
    <name type="scientific">Canis lupus familiaris</name>
    <name type="common">Dog</name>
    <name type="synonym">Canis familiaris</name>
    <dbReference type="NCBI Taxonomy" id="9615"/>
</organismHost>
<organismHost>
    <name type="scientific">Felis catus</name>
    <name type="common">Cat</name>
    <name type="synonym">Felis silvestris catus</name>
    <dbReference type="NCBI Taxonomy" id="9685"/>
</organismHost>
<name>CAPSD_PAVCN</name>
<proteinExistence type="inferred from homology"/>
<reference key="1">
    <citation type="journal article" date="1988" name="J. Virol.">
        <title>Nucleotide sequence and genome organization of canine parvovirus.</title>
        <authorList>
            <person name="Reed A.P."/>
            <person name="Jones E.V."/>
            <person name="Miller T.J."/>
        </authorList>
    </citation>
    <scope>NUCLEOTIDE SEQUENCE [GENOMIC DNA]</scope>
</reference>
<evidence type="ECO:0000250" key="1"/>
<evidence type="ECO:0000255" key="2"/>
<evidence type="ECO:0000256" key="3">
    <source>
        <dbReference type="SAM" id="MobiDB-lite"/>
    </source>
</evidence>
<evidence type="ECO:0000305" key="4"/>
<sequence>MAPPAKRARRGLVPPGYKYLGPGNSLDQGEPTNPSDAAAKEHDEAYAAYLRSGKNPYLYFSPADQRFIDQTKDAKDWGGKIGHYFFRAKKAIAPVLTDTPDHPSTSRPTKPTKRSKPPPHIFINLAKKKKAGAGQVKRDNLAPMSDGAVQPDGGQPAVRNERATGSGNGSGGGGGGGSGGVGISTGTFNNQTEFKFLENGWVEITANSSRLVHLNMPESENYRRVVVNNMDKTAVNGNMALDDIHAQIVTPWSLVDANAWGVWFNPGDWQLIVNTMSELHLVSFEQEIFNVVLKTVSESATQPPTKVYNNDLTASLMVALDSNNTMPFTPAAMRSETLGFYPWKPTIPTPWRYYFQWDRTLIPSHTGTSGTPTNIYHGTDPDDVQFYTIENSVPVHLLRTGDEFATGTFFFDCKPCRLTHTWQTNRALGLPPFLNSLPQSEGATNFGDIGVQQDKRRGVTQMGNTNYITEATIMRPAEVGYSAPYYSFEASTQGPFKTPIAAGRGGAQTYENQAADGDPRYAFGRQHGQKTTTTGETPERFTYIAHQDTGRYPEGDWIQNINFNLPVTNDNVLLPTDPIGGKTGINYTNIFNTYGPLTALNNVPPVYPNGQIWDKEFDTDLKPRLHVNAPFVCQNNCPGQLFVKVAPNLTNEYDPDASANMSRIVTYSDFWWKGKLVFKAKLRASHTWNPIQQMSINVDNQFNYVPSNIGGMKIVYEKSQLAPRKLY</sequence>
<dbReference type="EMBL" id="M19296">
    <property type="protein sequence ID" value="AAA67460.1"/>
    <property type="status" value="ALT_SEQ"/>
    <property type="molecule type" value="Genomic_DNA"/>
</dbReference>
<dbReference type="EMBL" id="M19296">
    <property type="protein sequence ID" value="AAA67461.1"/>
    <property type="status" value="ALT_SEQ"/>
    <property type="molecule type" value="Genomic_DNA"/>
</dbReference>
<dbReference type="PIR" id="B29962">
    <property type="entry name" value="VCPVCP"/>
</dbReference>
<dbReference type="RefSeq" id="NP_041400.1">
    <property type="nucleotide sequence ID" value="NC_001539.1"/>
</dbReference>
<dbReference type="RefSeq" id="NP_041401.1">
    <property type="nucleotide sequence ID" value="NC_001539.1"/>
</dbReference>
<dbReference type="SMR" id="P12930"/>
<dbReference type="GeneID" id="1724587"/>
<dbReference type="GeneID" id="1724589"/>
<dbReference type="KEGG" id="vg:1724587"/>
<dbReference type="KEGG" id="vg:1724589"/>
<dbReference type="Proteomes" id="UP000008295">
    <property type="component" value="Segment"/>
</dbReference>
<dbReference type="GO" id="GO:0043657">
    <property type="term" value="C:host cell"/>
    <property type="evidence" value="ECO:0007669"/>
    <property type="project" value="GOC"/>
</dbReference>
<dbReference type="GO" id="GO:0042025">
    <property type="term" value="C:host cell nucleus"/>
    <property type="evidence" value="ECO:0007669"/>
    <property type="project" value="UniProtKB-SubCell"/>
</dbReference>
<dbReference type="GO" id="GO:0039615">
    <property type="term" value="C:T=1 icosahedral viral capsid"/>
    <property type="evidence" value="ECO:0007669"/>
    <property type="project" value="UniProtKB-KW"/>
</dbReference>
<dbReference type="GO" id="GO:0046872">
    <property type="term" value="F:metal ion binding"/>
    <property type="evidence" value="ECO:0007669"/>
    <property type="project" value="UniProtKB-KW"/>
</dbReference>
<dbReference type="GO" id="GO:0005198">
    <property type="term" value="F:structural molecule activity"/>
    <property type="evidence" value="ECO:0007669"/>
    <property type="project" value="InterPro"/>
</dbReference>
<dbReference type="GO" id="GO:0098671">
    <property type="term" value="P:adhesion receptor-mediated virion attachment to host cell"/>
    <property type="evidence" value="ECO:0007669"/>
    <property type="project" value="UniProtKB-KW"/>
</dbReference>
<dbReference type="GO" id="GO:0075512">
    <property type="term" value="P:clathrin-dependent endocytosis of virus by host cell"/>
    <property type="evidence" value="ECO:0007669"/>
    <property type="project" value="UniProtKB-KW"/>
</dbReference>
<dbReference type="GO" id="GO:0098670">
    <property type="term" value="P:entry receptor-mediated virion attachment to host cell"/>
    <property type="evidence" value="ECO:0007669"/>
    <property type="project" value="UniProtKB-KW"/>
</dbReference>
<dbReference type="GO" id="GO:0075521">
    <property type="term" value="P:microtubule-dependent intracellular transport of viral material towards nucleus"/>
    <property type="evidence" value="ECO:0007669"/>
    <property type="project" value="UniProtKB-KW"/>
</dbReference>
<dbReference type="GO" id="GO:0140267">
    <property type="term" value="P:symbiont entry into host cell via permeabilization of host membrane"/>
    <property type="evidence" value="ECO:0007669"/>
    <property type="project" value="UniProtKB-KW"/>
</dbReference>
<dbReference type="GO" id="GO:0075732">
    <property type="term" value="P:viral penetration into host nucleus"/>
    <property type="evidence" value="ECO:0007669"/>
    <property type="project" value="UniProtKB-KW"/>
</dbReference>
<dbReference type="Gene3D" id="2.170.30.10">
    <property type="entry name" value="Parvovirus coat protein VP1/VP2"/>
    <property type="match status" value="1"/>
</dbReference>
<dbReference type="InterPro" id="IPR016184">
    <property type="entry name" value="Capsid/spike_ssDNA_virus"/>
</dbReference>
<dbReference type="InterPro" id="IPR001403">
    <property type="entry name" value="Parvovirus_coat"/>
</dbReference>
<dbReference type="InterPro" id="IPR013607">
    <property type="entry name" value="Phospholipase_A2-like"/>
</dbReference>
<dbReference type="InterPro" id="IPR036952">
    <property type="entry name" value="VP1/VP2"/>
</dbReference>
<dbReference type="Pfam" id="PF00740">
    <property type="entry name" value="Parvo_coat"/>
    <property type="match status" value="1"/>
</dbReference>
<dbReference type="Pfam" id="PF08398">
    <property type="entry name" value="Phospholip_A2_4"/>
    <property type="match status" value="1"/>
</dbReference>
<dbReference type="SUPFAM" id="SSF88645">
    <property type="entry name" value="ssDNA viruses"/>
    <property type="match status" value="1"/>
</dbReference>
<feature type="chain" id="PRO_0000039429" description="Capsid protein VP1">
    <location>
        <begin position="1"/>
        <end position="727"/>
    </location>
</feature>
<feature type="region of interest" description="Disordered" evidence="3">
    <location>
        <begin position="1"/>
        <end position="39"/>
    </location>
</feature>
<feature type="region of interest" description="Phospholipase A2-like" evidence="1">
    <location>
        <begin position="19"/>
        <end position="64"/>
    </location>
</feature>
<feature type="region of interest" description="Disordered" evidence="3">
    <location>
        <begin position="95"/>
        <end position="120"/>
    </location>
</feature>
<feature type="region of interest" description="Disordered" evidence="3">
    <location>
        <begin position="141"/>
        <end position="184"/>
    </location>
</feature>
<feature type="short sequence motif" description="Nuclear localization signal" evidence="2">
    <location>
        <begin position="4"/>
        <end position="13"/>
    </location>
</feature>
<feature type="compositionally biased region" description="Basic residues" evidence="3">
    <location>
        <begin position="1"/>
        <end position="10"/>
    </location>
</feature>
<feature type="compositionally biased region" description="Polar residues" evidence="3">
    <location>
        <begin position="25"/>
        <end position="35"/>
    </location>
</feature>
<feature type="compositionally biased region" description="Gly residues" evidence="3">
    <location>
        <begin position="166"/>
        <end position="183"/>
    </location>
</feature>
<feature type="binding site" evidence="1">
    <location>
        <position position="323"/>
    </location>
    <ligand>
        <name>Mg(2+)</name>
        <dbReference type="ChEBI" id="CHEBI:18420"/>
        <label>1</label>
    </ligand>
</feature>
<feature type="disulfide bond" evidence="1">
    <location>
        <begin position="633"/>
        <end position="637"/>
    </location>
</feature>
<feature type="splice variant" id="VSP_041139" description="In isoform VP2." evidence="4">
    <location>
        <begin position="1"/>
        <end position="143"/>
    </location>
</feature>
<protein>
    <recommendedName>
        <fullName>Capsid protein VP1</fullName>
    </recommendedName>
    <alternativeName>
        <fullName>Coat protein VP1</fullName>
    </alternativeName>
</protein>
<keyword id="KW-0025">Alternative splicing</keyword>
<keyword id="KW-0167">Capsid protein</keyword>
<keyword id="KW-1165">Clathrin-mediated endocytosis of virus by host</keyword>
<keyword id="KW-1176">Cytoplasmic inwards viral transport</keyword>
<keyword id="KW-1015">Disulfide bond</keyword>
<keyword id="KW-1048">Host nucleus</keyword>
<keyword id="KW-0945">Host-virus interaction</keyword>
<keyword id="KW-0460">Magnesium</keyword>
<keyword id="KW-0479">Metal-binding</keyword>
<keyword id="KW-1177">Microtubular inwards viral transport</keyword>
<keyword id="KW-1140">T=1 icosahedral capsid protein</keyword>
<keyword id="KW-1233">Viral attachment to host adhesion receptor</keyword>
<keyword id="KW-1161">Viral attachment to host cell</keyword>
<keyword id="KW-1234">Viral attachment to host entry receptor</keyword>
<keyword id="KW-1162">Viral penetration into host cytoplasm</keyword>
<keyword id="KW-1163">Viral penetration into host nucleus</keyword>
<keyword id="KW-1173">Viral penetration via permeabilization of host membrane</keyword>
<keyword id="KW-0946">Virion</keyword>
<keyword id="KW-1164">Virus endocytosis by host</keyword>
<keyword id="KW-1160">Virus entry into host cell</keyword>
<accession>P12930</accession>
<accession>Q84387</accession>
<organism>
    <name type="scientific">Canine parvovirus type 2 (isolate Dog/United States/CPV-N/1978)</name>
    <name type="common">CPV-2</name>
    <dbReference type="NCBI Taxonomy" id="10791"/>
    <lineage>
        <taxon>Viruses</taxon>
        <taxon>Monodnaviria</taxon>
        <taxon>Shotokuvirae</taxon>
        <taxon>Cossaviricota</taxon>
        <taxon>Quintoviricetes</taxon>
        <taxon>Piccovirales</taxon>
        <taxon>Parvoviridae</taxon>
        <taxon>Parvovirinae</taxon>
        <taxon>Protoparvovirus</taxon>
        <taxon>Protoparvovirus carnivoran1</taxon>
    </lineage>
</organism>
<comment type="function">
    <text evidence="1">Capsid protein self-assembles to form an icosahedral capsid with a T=1 symmetry, about 22 nm in diameter, and consisting of 60 copies of two size variants of the capsid proteins, VP1 and VP2, which differ by the presence of an N-terminal extension in the minor protein VP1. The capsid encapsulates the genomic ssDNA. Capsid proteins are responsible for the attachment to host cell receptor TFRC. This attachment induces virion internalization predominantly through clathrin-endocytosis. Binding to the host receptors also induces capsid rearrangements leading to surface exposure of VP1 N-terminus, specifically its phospholipase A2-like region and nuclear localization signal(s). VP1 N-terminus might serve as a lipolytic enzyme to breach the endosomal membrane during entry into host cell. Intracytoplasmic transport involves microtubules and interaction between capsid proteins and host dynein. Exposure of nuclear localization signal probably allows nuclear import of capsids (By similarity).</text>
</comment>
<comment type="subunit">
    <text evidence="1">Interacts with host TFRC.</text>
</comment>
<comment type="subcellular location">
    <subcellularLocation>
        <location evidence="1">Virion</location>
    </subcellularLocation>
    <subcellularLocation>
        <location evidence="4">Host nucleus</location>
    </subcellularLocation>
</comment>
<comment type="alternative products">
    <event type="alternative splicing"/>
    <isoform>
        <id>P12930-1</id>
        <name>VP1</name>
        <sequence type="displayed"/>
    </isoform>
    <isoform>
        <id>P12930-2</id>
        <name>VP2</name>
        <sequence type="described" ref="VSP_041139"/>
    </isoform>
</comment>
<comment type="domain">
    <text evidence="1">The N-terminus of VP1 is sequestered within the mature capsid. It contains a phospholipase A2-like region and nuclear localization signals that might be exposed by capsid modifications during virus entry (By similarity).</text>
</comment>
<comment type="miscellaneous">
    <text evidence="1">The capsids of autonomous parvoviruses expose a proportion of VP2 N-terminus and part of that sequence can be cleaved of to form VP3.</text>
</comment>
<comment type="miscellaneous">
    <molecule>Isoform VP1</molecule>
    <text>Minor splicing isoform.</text>
</comment>
<comment type="miscellaneous">
    <molecule>Isoform VP2</molecule>
    <text evidence="4">Major splicing isoform produced by deletion of the initiating AUG for VP1 and downstream translation of VP2.</text>
</comment>
<comment type="similarity">
    <text evidence="4">Belongs to the parvoviridae capsid protein family.</text>
</comment>
<comment type="sequence caution" evidence="4">
    <conflict type="erroneous gene model prediction">
        <sequence resource="EMBL-CDS" id="AAA67460"/>
    </conflict>
</comment>
<comment type="sequence caution" evidence="4">
    <conflict type="erroneous gene model prediction">
        <sequence resource="EMBL-CDS" id="AAA67461"/>
    </conflict>
</comment>